<organism>
    <name type="scientific">Bacillus subtilis (strain 168)</name>
    <dbReference type="NCBI Taxonomy" id="224308"/>
    <lineage>
        <taxon>Bacteria</taxon>
        <taxon>Bacillati</taxon>
        <taxon>Bacillota</taxon>
        <taxon>Bacilli</taxon>
        <taxon>Bacillales</taxon>
        <taxon>Bacillaceae</taxon>
        <taxon>Bacillus</taxon>
    </lineage>
</organism>
<proteinExistence type="evidence at protein level"/>
<dbReference type="EC" id="3.4.21.-"/>
<dbReference type="EMBL" id="U13634">
    <property type="protein sequence ID" value="AAB03370.1"/>
    <property type="molecule type" value="Genomic_DNA"/>
</dbReference>
<dbReference type="EMBL" id="Z33639">
    <property type="protein sequence ID" value="CAA83919.1"/>
    <property type="molecule type" value="Genomic_DNA"/>
</dbReference>
<dbReference type="EMBL" id="AL009126">
    <property type="protein sequence ID" value="CAB13488.1"/>
    <property type="molecule type" value="Genomic_DNA"/>
</dbReference>
<dbReference type="PIR" id="S61494">
    <property type="entry name" value="S61494"/>
</dbReference>
<dbReference type="RefSeq" id="NP_389497.1">
    <property type="nucleotide sequence ID" value="NC_000964.3"/>
</dbReference>
<dbReference type="RefSeq" id="WP_003238555.1">
    <property type="nucleotide sequence ID" value="NZ_OZ025638.1"/>
</dbReference>
<dbReference type="PDB" id="1YYF">
    <property type="method" value="X-ray"/>
    <property type="resolution" value="4.16 A"/>
    <property type="chains" value="C/D=1-181"/>
</dbReference>
<dbReference type="PDB" id="2Z3A">
    <property type="method" value="X-ray"/>
    <property type="resolution" value="3.00 A"/>
    <property type="chains" value="A/B/C/D/E/F/G/H/I/J/K/L=2-181"/>
</dbReference>
<dbReference type="PDB" id="2Z3B">
    <property type="method" value="X-ray"/>
    <property type="resolution" value="2.50 A"/>
    <property type="chains" value="A/B/C/D/E/F/G/H/I/J/K/L=2-181"/>
</dbReference>
<dbReference type="PDBsum" id="1YYF"/>
<dbReference type="PDBsum" id="2Z3A"/>
<dbReference type="PDBsum" id="2Z3B"/>
<dbReference type="SMR" id="P39070"/>
<dbReference type="FunCoup" id="P39070">
    <property type="interactions" value="110"/>
</dbReference>
<dbReference type="STRING" id="224308.BSU16150"/>
<dbReference type="MEROPS" id="T01.007"/>
<dbReference type="PaxDb" id="224308-BSU16150"/>
<dbReference type="EnsemblBacteria" id="CAB13488">
    <property type="protein sequence ID" value="CAB13488"/>
    <property type="gene ID" value="BSU_16150"/>
</dbReference>
<dbReference type="GeneID" id="86873876"/>
<dbReference type="GeneID" id="938111"/>
<dbReference type="KEGG" id="bsu:BSU16150"/>
<dbReference type="PATRIC" id="fig|224308.179.peg.1755"/>
<dbReference type="eggNOG" id="COG5405">
    <property type="taxonomic scope" value="Bacteria"/>
</dbReference>
<dbReference type="InParanoid" id="P39070"/>
<dbReference type="OrthoDB" id="9804884at2"/>
<dbReference type="PhylomeDB" id="P39070"/>
<dbReference type="BioCyc" id="BSUB:BSU16150-MONOMER"/>
<dbReference type="EvolutionaryTrace" id="P39070"/>
<dbReference type="PRO" id="PR:P39070"/>
<dbReference type="Proteomes" id="UP000001570">
    <property type="component" value="Chromosome"/>
</dbReference>
<dbReference type="GO" id="GO:0005737">
    <property type="term" value="C:cytoplasm"/>
    <property type="evidence" value="ECO:0000318"/>
    <property type="project" value="GO_Central"/>
</dbReference>
<dbReference type="GO" id="GO:0009376">
    <property type="term" value="C:HslUV protease complex"/>
    <property type="evidence" value="ECO:0007669"/>
    <property type="project" value="UniProtKB-UniRule"/>
</dbReference>
<dbReference type="GO" id="GO:0005839">
    <property type="term" value="C:proteasome core complex"/>
    <property type="evidence" value="ECO:0007669"/>
    <property type="project" value="InterPro"/>
</dbReference>
<dbReference type="GO" id="GO:0046872">
    <property type="term" value="F:metal ion binding"/>
    <property type="evidence" value="ECO:0007669"/>
    <property type="project" value="UniProtKB-KW"/>
</dbReference>
<dbReference type="GO" id="GO:0008236">
    <property type="term" value="F:serine-type peptidase activity"/>
    <property type="evidence" value="ECO:0007669"/>
    <property type="project" value="UniProtKB-KW"/>
</dbReference>
<dbReference type="GO" id="GO:0004298">
    <property type="term" value="F:threonine-type endopeptidase activity"/>
    <property type="evidence" value="ECO:0007669"/>
    <property type="project" value="InterPro"/>
</dbReference>
<dbReference type="GO" id="GO:0051603">
    <property type="term" value="P:proteolysis involved in protein catabolic process"/>
    <property type="evidence" value="ECO:0000318"/>
    <property type="project" value="GO_Central"/>
</dbReference>
<dbReference type="CDD" id="cd01913">
    <property type="entry name" value="protease_HslV"/>
    <property type="match status" value="1"/>
</dbReference>
<dbReference type="Gene3D" id="3.60.20.10">
    <property type="entry name" value="Glutamine Phosphoribosylpyrophosphate, subunit 1, domain 1"/>
    <property type="match status" value="1"/>
</dbReference>
<dbReference type="HAMAP" id="MF_00248">
    <property type="entry name" value="HslV"/>
    <property type="match status" value="1"/>
</dbReference>
<dbReference type="InterPro" id="IPR022281">
    <property type="entry name" value="ATP-dep_Prtase_HsIV_su"/>
</dbReference>
<dbReference type="InterPro" id="IPR029055">
    <property type="entry name" value="Ntn_hydrolases_N"/>
</dbReference>
<dbReference type="InterPro" id="IPR001353">
    <property type="entry name" value="Proteasome_sua/b"/>
</dbReference>
<dbReference type="InterPro" id="IPR023333">
    <property type="entry name" value="Proteasome_suB-type"/>
</dbReference>
<dbReference type="NCBIfam" id="TIGR03692">
    <property type="entry name" value="ATP_dep_HslV"/>
    <property type="match status" value="1"/>
</dbReference>
<dbReference type="NCBIfam" id="NF003964">
    <property type="entry name" value="PRK05456.1"/>
    <property type="match status" value="1"/>
</dbReference>
<dbReference type="PANTHER" id="PTHR32194:SF0">
    <property type="entry name" value="ATP-DEPENDENT PROTEASE SUBUNIT HSLV"/>
    <property type="match status" value="1"/>
</dbReference>
<dbReference type="PANTHER" id="PTHR32194">
    <property type="entry name" value="METALLOPROTEASE TLDD"/>
    <property type="match status" value="1"/>
</dbReference>
<dbReference type="Pfam" id="PF00227">
    <property type="entry name" value="Proteasome"/>
    <property type="match status" value="1"/>
</dbReference>
<dbReference type="PIRSF" id="PIRSF039093">
    <property type="entry name" value="HslV"/>
    <property type="match status" value="1"/>
</dbReference>
<dbReference type="SUPFAM" id="SSF56235">
    <property type="entry name" value="N-terminal nucleophile aminohydrolases (Ntn hydrolases)"/>
    <property type="match status" value="1"/>
</dbReference>
<dbReference type="PROSITE" id="PS51476">
    <property type="entry name" value="PROTEASOME_BETA_2"/>
    <property type="match status" value="1"/>
</dbReference>
<gene>
    <name type="primary">clpQ</name>
    <name type="synonym">codW</name>
    <name type="synonym">hslV</name>
    <name type="ordered locus">BSU16150</name>
</gene>
<comment type="function">
    <text evidence="2">Protease subunit of a proteasome-like degradation complex.</text>
</comment>
<comment type="subunit">
    <text evidence="1">A double ring-shaped homohexamer of ClpQ is capped on each side by a ring-shaped ClpY homohexamer. The assembly of the ClpQ/ClpY complex is dependent on binding of ATP (By similarity).</text>
</comment>
<comment type="subcellular location">
    <subcellularLocation>
        <location evidence="1">Cytoplasm</location>
    </subcellularLocation>
</comment>
<comment type="mass spectrometry" mass="19345.7" method="Unknown" evidence="2"/>
<comment type="similarity">
    <text evidence="3">Belongs to the peptidase T1B family. HslV subfamily.</text>
</comment>
<name>CLPQ_BACSU</name>
<evidence type="ECO:0000250" key="1"/>
<evidence type="ECO:0000269" key="2">
    <source>
    </source>
</evidence>
<evidence type="ECO:0000305" key="3"/>
<evidence type="ECO:0007829" key="4">
    <source>
        <dbReference type="PDB" id="2Z3B"/>
    </source>
</evidence>
<sequence length="181" mass="19478">MSSFHATTIFAVQHKGRSAMSGDGQVTFGQAVVMKHTARKVRKLFNGKVLAGFAGSVADAFTLFEKFEAKLEEYNGNLKRAAVELAKEWRSDKVLRKLEAMLIVMNQDTLLLVSGTGEVIEPDDGILAIGSGGNYALAAGRALKKHAGESMSASEIARAALETAGEICVYTNDQIILEELE</sequence>
<reference key="1">
    <citation type="journal article" date="1995" name="Mol. Microbiol.">
        <title>A gene required for nutritional repression of the Bacillus subtilis dipeptide permease operon.</title>
        <authorList>
            <person name="Slack F.J."/>
            <person name="Serror P."/>
            <person name="Joyce E."/>
            <person name="Sonenshein A.L."/>
        </authorList>
    </citation>
    <scope>NUCLEOTIDE SEQUENCE [GENOMIC DNA]</scope>
    <source>
        <strain>168 / JH642</strain>
    </source>
</reference>
<reference key="2">
    <citation type="submission" date="1994-05" db="EMBL/GenBank/DDBJ databases">
        <authorList>
            <person name="Walther T."/>
            <person name="Hofemeister J."/>
        </authorList>
    </citation>
    <scope>NUCLEOTIDE SEQUENCE [GENOMIC DNA]</scope>
    <source>
        <strain>PY143</strain>
    </source>
</reference>
<reference key="3">
    <citation type="journal article" date="1997" name="Nature">
        <title>The complete genome sequence of the Gram-positive bacterium Bacillus subtilis.</title>
        <authorList>
            <person name="Kunst F."/>
            <person name="Ogasawara N."/>
            <person name="Moszer I."/>
            <person name="Albertini A.M."/>
            <person name="Alloni G."/>
            <person name="Azevedo V."/>
            <person name="Bertero M.G."/>
            <person name="Bessieres P."/>
            <person name="Bolotin A."/>
            <person name="Borchert S."/>
            <person name="Borriss R."/>
            <person name="Boursier L."/>
            <person name="Brans A."/>
            <person name="Braun M."/>
            <person name="Brignell S.C."/>
            <person name="Bron S."/>
            <person name="Brouillet S."/>
            <person name="Bruschi C.V."/>
            <person name="Caldwell B."/>
            <person name="Capuano V."/>
            <person name="Carter N.M."/>
            <person name="Choi S.-K."/>
            <person name="Codani J.-J."/>
            <person name="Connerton I.F."/>
            <person name="Cummings N.J."/>
            <person name="Daniel R.A."/>
            <person name="Denizot F."/>
            <person name="Devine K.M."/>
            <person name="Duesterhoeft A."/>
            <person name="Ehrlich S.D."/>
            <person name="Emmerson P.T."/>
            <person name="Entian K.-D."/>
            <person name="Errington J."/>
            <person name="Fabret C."/>
            <person name="Ferrari E."/>
            <person name="Foulger D."/>
            <person name="Fritz C."/>
            <person name="Fujita M."/>
            <person name="Fujita Y."/>
            <person name="Fuma S."/>
            <person name="Galizzi A."/>
            <person name="Galleron N."/>
            <person name="Ghim S.-Y."/>
            <person name="Glaser P."/>
            <person name="Goffeau A."/>
            <person name="Golightly E.J."/>
            <person name="Grandi G."/>
            <person name="Guiseppi G."/>
            <person name="Guy B.J."/>
            <person name="Haga K."/>
            <person name="Haiech J."/>
            <person name="Harwood C.R."/>
            <person name="Henaut A."/>
            <person name="Hilbert H."/>
            <person name="Holsappel S."/>
            <person name="Hosono S."/>
            <person name="Hullo M.-F."/>
            <person name="Itaya M."/>
            <person name="Jones L.-M."/>
            <person name="Joris B."/>
            <person name="Karamata D."/>
            <person name="Kasahara Y."/>
            <person name="Klaerr-Blanchard M."/>
            <person name="Klein C."/>
            <person name="Kobayashi Y."/>
            <person name="Koetter P."/>
            <person name="Koningstein G."/>
            <person name="Krogh S."/>
            <person name="Kumano M."/>
            <person name="Kurita K."/>
            <person name="Lapidus A."/>
            <person name="Lardinois S."/>
            <person name="Lauber J."/>
            <person name="Lazarevic V."/>
            <person name="Lee S.-M."/>
            <person name="Levine A."/>
            <person name="Liu H."/>
            <person name="Masuda S."/>
            <person name="Mauel C."/>
            <person name="Medigue C."/>
            <person name="Medina N."/>
            <person name="Mellado R.P."/>
            <person name="Mizuno M."/>
            <person name="Moestl D."/>
            <person name="Nakai S."/>
            <person name="Noback M."/>
            <person name="Noone D."/>
            <person name="O'Reilly M."/>
            <person name="Ogawa K."/>
            <person name="Ogiwara A."/>
            <person name="Oudega B."/>
            <person name="Park S.-H."/>
            <person name="Parro V."/>
            <person name="Pohl T.M."/>
            <person name="Portetelle D."/>
            <person name="Porwollik S."/>
            <person name="Prescott A.M."/>
            <person name="Presecan E."/>
            <person name="Pujic P."/>
            <person name="Purnelle B."/>
            <person name="Rapoport G."/>
            <person name="Rey M."/>
            <person name="Reynolds S."/>
            <person name="Rieger M."/>
            <person name="Rivolta C."/>
            <person name="Rocha E."/>
            <person name="Roche B."/>
            <person name="Rose M."/>
            <person name="Sadaie Y."/>
            <person name="Sato T."/>
            <person name="Scanlan E."/>
            <person name="Schleich S."/>
            <person name="Schroeter R."/>
            <person name="Scoffone F."/>
            <person name="Sekiguchi J."/>
            <person name="Sekowska A."/>
            <person name="Seror S.J."/>
            <person name="Serror P."/>
            <person name="Shin B.-S."/>
            <person name="Soldo B."/>
            <person name="Sorokin A."/>
            <person name="Tacconi E."/>
            <person name="Takagi T."/>
            <person name="Takahashi H."/>
            <person name="Takemaru K."/>
            <person name="Takeuchi M."/>
            <person name="Tamakoshi A."/>
            <person name="Tanaka T."/>
            <person name="Terpstra P."/>
            <person name="Tognoni A."/>
            <person name="Tosato V."/>
            <person name="Uchiyama S."/>
            <person name="Vandenbol M."/>
            <person name="Vannier F."/>
            <person name="Vassarotti A."/>
            <person name="Viari A."/>
            <person name="Wambutt R."/>
            <person name="Wedler E."/>
            <person name="Wedler H."/>
            <person name="Weitzenegger T."/>
            <person name="Winters P."/>
            <person name="Wipat A."/>
            <person name="Yamamoto H."/>
            <person name="Yamane K."/>
            <person name="Yasumoto K."/>
            <person name="Yata K."/>
            <person name="Yoshida K."/>
            <person name="Yoshikawa H.-F."/>
            <person name="Zumstein E."/>
            <person name="Yoshikawa H."/>
            <person name="Danchin A."/>
        </authorList>
    </citation>
    <scope>NUCLEOTIDE SEQUENCE [LARGE SCALE GENOMIC DNA]</scope>
    <source>
        <strain>168</strain>
    </source>
</reference>
<reference key="4">
    <citation type="journal article" date="2001" name="EMBO J.">
        <title>The ATP-dependent CodWX (HslVU) protease in Bacillus subtilis is an N-terminal serine protease.</title>
        <authorList>
            <person name="Kang M.S."/>
            <person name="Lim B.K."/>
            <person name="Seong I.S."/>
            <person name="Seol J.H."/>
            <person name="Tanahashi N."/>
            <person name="Tanaka K."/>
            <person name="Chung C.H."/>
        </authorList>
    </citation>
    <scope>PROTEIN SEQUENCE OF 2-8</scope>
    <scope>CATALYTIC ACTIVITY</scope>
    <scope>FUNCTION AS A SERINE PROTEASE</scope>
    <scope>MUTAGENESIS OF SER-2; ALA-6; THR-7 AND THR-8</scope>
    <scope>MASS SPECTROMETRY</scope>
</reference>
<reference key="5">
    <citation type="journal article" date="2005" name="Acta Crystallogr. D">
        <title>Correction of X-ray intensities from an HslV-HslU co-crystal containing lattice-translocation defects.</title>
        <authorList>
            <person name="Wang J."/>
            <person name="Rho S.H."/>
            <person name="Park H.H."/>
            <person name="Eom S.H."/>
        </authorList>
    </citation>
    <scope>X-RAY CRYSTALLOGRAPHY (4.16 ANGSTROMS) IN COMPLEX WITH E.COLI HSLU AND ADP</scope>
</reference>
<reference key="6">
    <citation type="journal article" date="2008" name="Proteins">
        <title>Crystal structure of Bacillus subtilis CodW, a noncanonical HslV-like peptidase with an impaired catalytic apparatus.</title>
        <authorList>
            <person name="Rho S.H."/>
            <person name="Park H.H."/>
            <person name="Kang G.B."/>
            <person name="Im Y.J."/>
            <person name="Kang M.S."/>
            <person name="Lim B.K."/>
            <person name="Seong I.S."/>
            <person name="Seol J."/>
            <person name="Chung C.H."/>
            <person name="Wang J."/>
            <person name="Eom S.H."/>
        </authorList>
    </citation>
    <scope>X-RAY CRYSTALLOGRAPHY (2.5 ANGSTROMS) OF 2-181 IN COMPLEX WITH SODIUM IONS</scope>
</reference>
<feature type="initiator methionine" description="Removed" evidence="2">
    <location>
        <position position="1"/>
    </location>
</feature>
<feature type="chain" id="PRO_0000026678" description="ATP-dependent protease subunit ClpQ">
    <location>
        <begin position="2"/>
        <end position="181"/>
    </location>
</feature>
<feature type="active site">
    <location>
        <position position="2"/>
    </location>
</feature>
<feature type="binding site">
    <location>
        <position position="165"/>
    </location>
    <ligand>
        <name>Na(+)</name>
        <dbReference type="ChEBI" id="CHEBI:29101"/>
    </ligand>
</feature>
<feature type="binding site">
    <location>
        <position position="168"/>
    </location>
    <ligand>
        <name>Na(+)</name>
        <dbReference type="ChEBI" id="CHEBI:29101"/>
    </ligand>
</feature>
<feature type="binding site">
    <location>
        <position position="171"/>
    </location>
    <ligand>
        <name>Na(+)</name>
        <dbReference type="ChEBI" id="CHEBI:29101"/>
    </ligand>
</feature>
<feature type="mutagenesis site" description="Complete loss of protease activity." evidence="2">
    <original>S</original>
    <variation>A</variation>
    <variation>T</variation>
    <location>
        <position position="2"/>
    </location>
</feature>
<feature type="mutagenesis site" description="No effect." evidence="2">
    <original>A</original>
    <variation>G</variation>
    <location>
        <position position="6"/>
    </location>
</feature>
<feature type="mutagenesis site" description="Complete loss of protease activity. The mutant is only found as a monomer; when associated with A-8." evidence="2">
    <original>T</original>
    <variation>A</variation>
    <location>
        <position position="7"/>
    </location>
</feature>
<feature type="mutagenesis site" description="Complete loss of protease activity. The mutant is only found as a monomer; when associated with A-7." evidence="2">
    <original>T</original>
    <variation>A</variation>
    <location>
        <position position="8"/>
    </location>
</feature>
<feature type="sequence conflict" description="In Ref. 2; CAA83919." evidence="3" ref="2">
    <location>
        <begin position="2"/>
        <end position="5"/>
    </location>
</feature>
<feature type="sequence conflict" description="In Ref. 2; CAA83919." evidence="3" ref="2">
    <original>A</original>
    <variation>R</variation>
    <location>
        <position position="60"/>
    </location>
</feature>
<feature type="sequence conflict" description="In Ref. 2; CAA83919." evidence="3" ref="2">
    <original>E</original>
    <variation>K</variation>
    <location>
        <position position="72"/>
    </location>
</feature>
<feature type="strand" evidence="4">
    <location>
        <begin position="9"/>
        <end position="14"/>
    </location>
</feature>
<feature type="strand" evidence="4">
    <location>
        <begin position="17"/>
        <end position="22"/>
    </location>
</feature>
<feature type="strand" evidence="4">
    <location>
        <begin position="26"/>
        <end position="28"/>
    </location>
</feature>
<feature type="turn" evidence="4">
    <location>
        <begin position="29"/>
        <end position="31"/>
    </location>
</feature>
<feature type="strand" evidence="4">
    <location>
        <begin position="32"/>
        <end position="36"/>
    </location>
</feature>
<feature type="strand" evidence="4">
    <location>
        <begin position="41"/>
        <end position="44"/>
    </location>
</feature>
<feature type="turn" evidence="4">
    <location>
        <begin position="45"/>
        <end position="48"/>
    </location>
</feature>
<feature type="strand" evidence="4">
    <location>
        <begin position="49"/>
        <end position="53"/>
    </location>
</feature>
<feature type="helix" evidence="4">
    <location>
        <begin position="57"/>
        <end position="73"/>
    </location>
</feature>
<feature type="turn" evidence="4">
    <location>
        <begin position="74"/>
        <end position="76"/>
    </location>
</feature>
<feature type="helix" evidence="4">
    <location>
        <begin position="78"/>
        <end position="91"/>
    </location>
</feature>
<feature type="helix" evidence="4">
    <location>
        <begin position="95"/>
        <end position="97"/>
    </location>
</feature>
<feature type="strand" evidence="4">
    <location>
        <begin position="102"/>
        <end position="105"/>
    </location>
</feature>
<feature type="strand" evidence="4">
    <location>
        <begin position="110"/>
        <end position="113"/>
    </location>
</feature>
<feature type="strand" evidence="4">
    <location>
        <begin position="123"/>
        <end position="130"/>
    </location>
</feature>
<feature type="helix" evidence="4">
    <location>
        <begin position="133"/>
        <end position="147"/>
    </location>
</feature>
<feature type="helix" evidence="4">
    <location>
        <begin position="148"/>
        <end position="150"/>
    </location>
</feature>
<feature type="helix" evidence="4">
    <location>
        <begin position="153"/>
        <end position="167"/>
    </location>
</feature>
<feature type="strand" evidence="4">
    <location>
        <begin position="176"/>
        <end position="180"/>
    </location>
</feature>
<accession>P39070</accession>
<protein>
    <recommendedName>
        <fullName>ATP-dependent protease subunit ClpQ</fullName>
        <ecNumber>3.4.21.-</ecNumber>
    </recommendedName>
</protein>
<keyword id="KW-0002">3D-structure</keyword>
<keyword id="KW-0963">Cytoplasm</keyword>
<keyword id="KW-0903">Direct protein sequencing</keyword>
<keyword id="KW-0378">Hydrolase</keyword>
<keyword id="KW-0479">Metal-binding</keyword>
<keyword id="KW-0645">Protease</keyword>
<keyword id="KW-1185">Reference proteome</keyword>
<keyword id="KW-0720">Serine protease</keyword>
<keyword id="KW-0915">Sodium</keyword>